<comment type="function">
    <text evidence="1">Specifically methylates the guanine in position 2445 (m2G2445) and the guanine in position 2069 (m7G2069) of 23S rRNA.</text>
</comment>
<comment type="catalytic activity">
    <reaction evidence="1">
        <text>guanosine(2445) in 23S rRNA + S-adenosyl-L-methionine = N(2)-methylguanosine(2445) in 23S rRNA + S-adenosyl-L-homocysteine + H(+)</text>
        <dbReference type="Rhea" id="RHEA:42740"/>
        <dbReference type="Rhea" id="RHEA-COMP:10215"/>
        <dbReference type="Rhea" id="RHEA-COMP:10216"/>
        <dbReference type="ChEBI" id="CHEBI:15378"/>
        <dbReference type="ChEBI" id="CHEBI:57856"/>
        <dbReference type="ChEBI" id="CHEBI:59789"/>
        <dbReference type="ChEBI" id="CHEBI:74269"/>
        <dbReference type="ChEBI" id="CHEBI:74481"/>
        <dbReference type="EC" id="2.1.1.173"/>
    </reaction>
</comment>
<comment type="catalytic activity">
    <reaction evidence="1">
        <text>guanosine(2069) in 23S rRNA + S-adenosyl-L-methionine = N(2)-methylguanosine(2069) in 23S rRNA + S-adenosyl-L-homocysteine + H(+)</text>
        <dbReference type="Rhea" id="RHEA:43772"/>
        <dbReference type="Rhea" id="RHEA-COMP:10688"/>
        <dbReference type="Rhea" id="RHEA-COMP:10689"/>
        <dbReference type="ChEBI" id="CHEBI:15378"/>
        <dbReference type="ChEBI" id="CHEBI:57856"/>
        <dbReference type="ChEBI" id="CHEBI:59789"/>
        <dbReference type="ChEBI" id="CHEBI:74269"/>
        <dbReference type="ChEBI" id="CHEBI:74481"/>
        <dbReference type="EC" id="2.1.1.264"/>
    </reaction>
</comment>
<comment type="subcellular location">
    <subcellularLocation>
        <location evidence="1">Cytoplasm</location>
    </subcellularLocation>
</comment>
<comment type="similarity">
    <text evidence="1">Belongs to the methyltransferase superfamily. RlmKL family.</text>
</comment>
<keyword id="KW-0963">Cytoplasm</keyword>
<keyword id="KW-0489">Methyltransferase</keyword>
<keyword id="KW-1185">Reference proteome</keyword>
<keyword id="KW-0694">RNA-binding</keyword>
<keyword id="KW-0698">rRNA processing</keyword>
<keyword id="KW-0949">S-adenosyl-L-methionine</keyword>
<keyword id="KW-0808">Transferase</keyword>
<sequence length="701" mass="81937">MNDLFASTNFGTEKLLEKELLSLGVSDIKIIKGGIYYKSNDLLLYKSLMWSRIASRIYLCIKIFTINNIDDLYDHVYSINWTEIFHIHNTFLVNFKGTNNFIRNSLFGALVTKDAIIDQFQNKYASRPNVNLIEPDIRIKLVLLNNNILHIMLDLSGEPLNKRGYRQFYNTTPIKENLATAIVLSSGWNENTPMIDPMCGSGTFLIEAAMISSDRAPGLKRLKWGFQFWKKYNKNLWKKVLEEAEEKFKIGIKKCFQNYFIGYDYDPEIIKKAKKNASNAGVLKIIQFLTKDVNNLKNVYHKEQEGIILSNPPYGERYQTENKLVGLYVQLGITAKKYFKNWKLSIFSASTFLLDFLQMQSHEKYFFKNGPLNCIQKNFLIFFKNSSITTNEFKDRLNKNFKKLKKWINSEKLESFRVYHADLPNYNIIVDVYDKWVVIQEYQAPKSIDHNKAFKRLCDAIYYTKEVLSISINNIVLKTRIKNKNKTQYKKLFNSNDFITIKEYHAKFLVNLTDYVDTGLFSDKRLVRKLLGVLAKGKDFLNLFSYTGTATVYAGLGHANSTTSVDISNTYIKWSARNMSLNNLTSSQHNFIQYDCLKWIKKTNQKFDLIFINPPTFSNSKKMQQSFDLKRDYLDVMIHLKKILRHDGTIIFSSSTRNFEINFNCIKKMQLHAKKITNKIQSKDHLKNSNIYHSWLIKHIK</sequence>
<proteinExistence type="inferred from homology"/>
<feature type="chain" id="PRO_0000140475" description="Ribosomal RNA large subunit methyltransferase K/L">
    <location>
        <begin position="1"/>
        <end position="701"/>
    </location>
</feature>
<feature type="domain" description="THUMP" evidence="1">
    <location>
        <begin position="43"/>
        <end position="155"/>
    </location>
</feature>
<gene>
    <name evidence="1" type="primary">rlmL</name>
    <name type="ordered locus">BU363</name>
</gene>
<dbReference type="EC" id="2.1.1.173" evidence="1"/>
<dbReference type="EC" id="2.1.1.264" evidence="1"/>
<dbReference type="EMBL" id="BA000003">
    <property type="protein sequence ID" value="BAB13067.1"/>
    <property type="molecule type" value="Genomic_DNA"/>
</dbReference>
<dbReference type="RefSeq" id="NP_240181.1">
    <property type="nucleotide sequence ID" value="NC_002528.1"/>
</dbReference>
<dbReference type="RefSeq" id="WP_009874320.1">
    <property type="nucleotide sequence ID" value="NC_002528.1"/>
</dbReference>
<dbReference type="SMR" id="P57444"/>
<dbReference type="STRING" id="563178.BUAP5A_356"/>
<dbReference type="EnsemblBacteria" id="BAB13067">
    <property type="protein sequence ID" value="BAB13067"/>
    <property type="gene ID" value="BAB13067"/>
</dbReference>
<dbReference type="KEGG" id="buc:BU363"/>
<dbReference type="PATRIC" id="fig|107806.10.peg.377"/>
<dbReference type="eggNOG" id="COG0116">
    <property type="taxonomic scope" value="Bacteria"/>
</dbReference>
<dbReference type="eggNOG" id="COG1092">
    <property type="taxonomic scope" value="Bacteria"/>
</dbReference>
<dbReference type="HOGENOM" id="CLU_014042_2_0_6"/>
<dbReference type="Proteomes" id="UP000001806">
    <property type="component" value="Chromosome"/>
</dbReference>
<dbReference type="GO" id="GO:0005737">
    <property type="term" value="C:cytoplasm"/>
    <property type="evidence" value="ECO:0007669"/>
    <property type="project" value="UniProtKB-SubCell"/>
</dbReference>
<dbReference type="GO" id="GO:0052915">
    <property type="term" value="F:23S rRNA (guanine(2445)-N(2))-methyltransferase activity"/>
    <property type="evidence" value="ECO:0007669"/>
    <property type="project" value="UniProtKB-UniRule"/>
</dbReference>
<dbReference type="GO" id="GO:0003723">
    <property type="term" value="F:RNA binding"/>
    <property type="evidence" value="ECO:0007669"/>
    <property type="project" value="UniProtKB-KW"/>
</dbReference>
<dbReference type="GO" id="GO:0070043">
    <property type="term" value="F:rRNA (guanine-N7-)-methyltransferase activity"/>
    <property type="evidence" value="ECO:0007669"/>
    <property type="project" value="UniProtKB-UniRule"/>
</dbReference>
<dbReference type="CDD" id="cd02440">
    <property type="entry name" value="AdoMet_MTases"/>
    <property type="match status" value="1"/>
</dbReference>
<dbReference type="CDD" id="cd11715">
    <property type="entry name" value="THUMP_AdoMetMT"/>
    <property type="match status" value="1"/>
</dbReference>
<dbReference type="Gene3D" id="3.30.2130.30">
    <property type="match status" value="1"/>
</dbReference>
<dbReference type="Gene3D" id="3.30.750.80">
    <property type="entry name" value="RNA methyltransferase domain (HRMD) like"/>
    <property type="match status" value="1"/>
</dbReference>
<dbReference type="Gene3D" id="3.40.50.150">
    <property type="entry name" value="Vaccinia Virus protein VP39"/>
    <property type="match status" value="2"/>
</dbReference>
<dbReference type="HAMAP" id="MF_01858">
    <property type="entry name" value="23SrRNA_methyltr_KL"/>
    <property type="match status" value="1"/>
</dbReference>
<dbReference type="InterPro" id="IPR017244">
    <property type="entry name" value="23SrRNA_methyltr_KL"/>
</dbReference>
<dbReference type="InterPro" id="IPR002052">
    <property type="entry name" value="DNA_methylase_N6_adenine_CS"/>
</dbReference>
<dbReference type="InterPro" id="IPR000241">
    <property type="entry name" value="RlmKL-like_Mtase"/>
</dbReference>
<dbReference type="InterPro" id="IPR053943">
    <property type="entry name" value="RlmKL-like_Mtase_CS"/>
</dbReference>
<dbReference type="InterPro" id="IPR054170">
    <property type="entry name" value="RlmL_1st"/>
</dbReference>
<dbReference type="InterPro" id="IPR019614">
    <property type="entry name" value="SAM-dep_methyl-trfase"/>
</dbReference>
<dbReference type="InterPro" id="IPR029063">
    <property type="entry name" value="SAM-dependent_MTases_sf"/>
</dbReference>
<dbReference type="InterPro" id="IPR004114">
    <property type="entry name" value="THUMP_dom"/>
</dbReference>
<dbReference type="NCBIfam" id="NF008748">
    <property type="entry name" value="PRK11783.1"/>
    <property type="match status" value="1"/>
</dbReference>
<dbReference type="PANTHER" id="PTHR47313">
    <property type="entry name" value="RIBOSOMAL RNA LARGE SUBUNIT METHYLTRANSFERASE K/L"/>
    <property type="match status" value="1"/>
</dbReference>
<dbReference type="PANTHER" id="PTHR47313:SF1">
    <property type="entry name" value="RIBOSOMAL RNA LARGE SUBUNIT METHYLTRANSFERASE K_L"/>
    <property type="match status" value="1"/>
</dbReference>
<dbReference type="Pfam" id="PF10672">
    <property type="entry name" value="Methyltrans_SAM"/>
    <property type="match status" value="1"/>
</dbReference>
<dbReference type="Pfam" id="PF22020">
    <property type="entry name" value="RlmL_1st"/>
    <property type="match status" value="1"/>
</dbReference>
<dbReference type="Pfam" id="PF02926">
    <property type="entry name" value="THUMP"/>
    <property type="match status" value="1"/>
</dbReference>
<dbReference type="Pfam" id="PF01170">
    <property type="entry name" value="UPF0020"/>
    <property type="match status" value="1"/>
</dbReference>
<dbReference type="PIRSF" id="PIRSF037618">
    <property type="entry name" value="RNA_Mtase_bacteria_prd"/>
    <property type="match status" value="1"/>
</dbReference>
<dbReference type="PRINTS" id="PR00507">
    <property type="entry name" value="N12N6MTFRASE"/>
</dbReference>
<dbReference type="SMART" id="SM00981">
    <property type="entry name" value="THUMP"/>
    <property type="match status" value="1"/>
</dbReference>
<dbReference type="SUPFAM" id="SSF53335">
    <property type="entry name" value="S-adenosyl-L-methionine-dependent methyltransferases"/>
    <property type="match status" value="2"/>
</dbReference>
<dbReference type="PROSITE" id="PS51165">
    <property type="entry name" value="THUMP"/>
    <property type="match status" value="1"/>
</dbReference>
<dbReference type="PROSITE" id="PS01261">
    <property type="entry name" value="UPF0020"/>
    <property type="match status" value="1"/>
</dbReference>
<protein>
    <recommendedName>
        <fullName evidence="1">Ribosomal RNA large subunit methyltransferase K/L</fullName>
    </recommendedName>
    <domain>
        <recommendedName>
            <fullName evidence="1">23S rRNA m2G2445 methyltransferase</fullName>
            <ecNumber evidence="1">2.1.1.173</ecNumber>
        </recommendedName>
        <alternativeName>
            <fullName evidence="1">rRNA (guanine-N(2)-)-methyltransferase RlmL</fullName>
        </alternativeName>
    </domain>
    <domain>
        <recommendedName>
            <fullName evidence="1">23S rRNA m7G2069 methyltransferase</fullName>
            <ecNumber evidence="1">2.1.1.264</ecNumber>
        </recommendedName>
        <alternativeName>
            <fullName evidence="1">rRNA (guanine-N(7)-)-methyltransferase RlmK</fullName>
        </alternativeName>
    </domain>
</protein>
<accession>P57444</accession>
<reference key="1">
    <citation type="journal article" date="2000" name="Nature">
        <title>Genome sequence of the endocellular bacterial symbiont of aphids Buchnera sp. APS.</title>
        <authorList>
            <person name="Shigenobu S."/>
            <person name="Watanabe H."/>
            <person name="Hattori M."/>
            <person name="Sakaki Y."/>
            <person name="Ishikawa H."/>
        </authorList>
    </citation>
    <scope>NUCLEOTIDE SEQUENCE [LARGE SCALE GENOMIC DNA]</scope>
    <source>
        <strain>APS</strain>
    </source>
</reference>
<evidence type="ECO:0000255" key="1">
    <source>
        <dbReference type="HAMAP-Rule" id="MF_01858"/>
    </source>
</evidence>
<organism>
    <name type="scientific">Buchnera aphidicola subsp. Acyrthosiphon pisum (strain APS)</name>
    <name type="common">Acyrthosiphon pisum symbiotic bacterium</name>
    <dbReference type="NCBI Taxonomy" id="107806"/>
    <lineage>
        <taxon>Bacteria</taxon>
        <taxon>Pseudomonadati</taxon>
        <taxon>Pseudomonadota</taxon>
        <taxon>Gammaproteobacteria</taxon>
        <taxon>Enterobacterales</taxon>
        <taxon>Erwiniaceae</taxon>
        <taxon>Buchnera</taxon>
    </lineage>
</organism>
<name>RLMKL_BUCAI</name>